<dbReference type="EC" id="2.7.1.33" evidence="1"/>
<dbReference type="EMBL" id="CP000557">
    <property type="protein sequence ID" value="ABO65450.1"/>
    <property type="molecule type" value="Genomic_DNA"/>
</dbReference>
<dbReference type="RefSeq" id="WP_008881710.1">
    <property type="nucleotide sequence ID" value="NC_009328.1"/>
</dbReference>
<dbReference type="SMR" id="A4IJE6"/>
<dbReference type="KEGG" id="gtn:GTNG_0063"/>
<dbReference type="eggNOG" id="COG1521">
    <property type="taxonomic scope" value="Bacteria"/>
</dbReference>
<dbReference type="HOGENOM" id="CLU_066627_1_0_9"/>
<dbReference type="UniPathway" id="UPA00241">
    <property type="reaction ID" value="UER00352"/>
</dbReference>
<dbReference type="Proteomes" id="UP000001578">
    <property type="component" value="Chromosome"/>
</dbReference>
<dbReference type="GO" id="GO:0005737">
    <property type="term" value="C:cytoplasm"/>
    <property type="evidence" value="ECO:0007669"/>
    <property type="project" value="UniProtKB-SubCell"/>
</dbReference>
<dbReference type="GO" id="GO:0005524">
    <property type="term" value="F:ATP binding"/>
    <property type="evidence" value="ECO:0007669"/>
    <property type="project" value="UniProtKB-UniRule"/>
</dbReference>
<dbReference type="GO" id="GO:0046872">
    <property type="term" value="F:metal ion binding"/>
    <property type="evidence" value="ECO:0007669"/>
    <property type="project" value="UniProtKB-KW"/>
</dbReference>
<dbReference type="GO" id="GO:0004594">
    <property type="term" value="F:pantothenate kinase activity"/>
    <property type="evidence" value="ECO:0007669"/>
    <property type="project" value="UniProtKB-UniRule"/>
</dbReference>
<dbReference type="GO" id="GO:0015937">
    <property type="term" value="P:coenzyme A biosynthetic process"/>
    <property type="evidence" value="ECO:0007669"/>
    <property type="project" value="UniProtKB-UniRule"/>
</dbReference>
<dbReference type="CDD" id="cd24015">
    <property type="entry name" value="ASKHA_NBD_PanK-III"/>
    <property type="match status" value="1"/>
</dbReference>
<dbReference type="Gene3D" id="3.30.420.40">
    <property type="match status" value="2"/>
</dbReference>
<dbReference type="HAMAP" id="MF_01274">
    <property type="entry name" value="Pantothen_kinase_3"/>
    <property type="match status" value="1"/>
</dbReference>
<dbReference type="InterPro" id="IPR043129">
    <property type="entry name" value="ATPase_NBD"/>
</dbReference>
<dbReference type="InterPro" id="IPR004619">
    <property type="entry name" value="Type_III_PanK"/>
</dbReference>
<dbReference type="NCBIfam" id="TIGR00671">
    <property type="entry name" value="baf"/>
    <property type="match status" value="1"/>
</dbReference>
<dbReference type="NCBIfam" id="NF009843">
    <property type="entry name" value="PRK13318.1-1"/>
    <property type="match status" value="1"/>
</dbReference>
<dbReference type="NCBIfam" id="NF009847">
    <property type="entry name" value="PRK13318.1-5"/>
    <property type="match status" value="1"/>
</dbReference>
<dbReference type="NCBIfam" id="NF009848">
    <property type="entry name" value="PRK13318.1-6"/>
    <property type="match status" value="1"/>
</dbReference>
<dbReference type="NCBIfam" id="NF009855">
    <property type="entry name" value="PRK13321.1"/>
    <property type="match status" value="1"/>
</dbReference>
<dbReference type="PANTHER" id="PTHR34265">
    <property type="entry name" value="TYPE III PANTOTHENATE KINASE"/>
    <property type="match status" value="1"/>
</dbReference>
<dbReference type="PANTHER" id="PTHR34265:SF1">
    <property type="entry name" value="TYPE III PANTOTHENATE KINASE"/>
    <property type="match status" value="1"/>
</dbReference>
<dbReference type="Pfam" id="PF03309">
    <property type="entry name" value="Pan_kinase"/>
    <property type="match status" value="1"/>
</dbReference>
<dbReference type="SUPFAM" id="SSF53067">
    <property type="entry name" value="Actin-like ATPase domain"/>
    <property type="match status" value="2"/>
</dbReference>
<protein>
    <recommendedName>
        <fullName evidence="1">Type III pantothenate kinase</fullName>
        <ecNumber evidence="1">2.7.1.33</ecNumber>
    </recommendedName>
    <alternativeName>
        <fullName evidence="1">PanK-III</fullName>
    </alternativeName>
    <alternativeName>
        <fullName evidence="1">Pantothenic acid kinase</fullName>
    </alternativeName>
</protein>
<comment type="function">
    <text evidence="1">Catalyzes the phosphorylation of pantothenate (Pan), the first step in CoA biosynthesis.</text>
</comment>
<comment type="catalytic activity">
    <reaction evidence="1">
        <text>(R)-pantothenate + ATP = (R)-4'-phosphopantothenate + ADP + H(+)</text>
        <dbReference type="Rhea" id="RHEA:16373"/>
        <dbReference type="ChEBI" id="CHEBI:10986"/>
        <dbReference type="ChEBI" id="CHEBI:15378"/>
        <dbReference type="ChEBI" id="CHEBI:29032"/>
        <dbReference type="ChEBI" id="CHEBI:30616"/>
        <dbReference type="ChEBI" id="CHEBI:456216"/>
        <dbReference type="EC" id="2.7.1.33"/>
    </reaction>
</comment>
<comment type="cofactor">
    <cofactor evidence="1">
        <name>NH4(+)</name>
        <dbReference type="ChEBI" id="CHEBI:28938"/>
    </cofactor>
    <cofactor evidence="1">
        <name>K(+)</name>
        <dbReference type="ChEBI" id="CHEBI:29103"/>
    </cofactor>
    <text evidence="1">A monovalent cation. Ammonium or potassium.</text>
</comment>
<comment type="pathway">
    <text evidence="1">Cofactor biosynthesis; coenzyme A biosynthesis; CoA from (R)-pantothenate: step 1/5.</text>
</comment>
<comment type="subunit">
    <text evidence="1">Homodimer.</text>
</comment>
<comment type="subcellular location">
    <subcellularLocation>
        <location evidence="1">Cytoplasm</location>
    </subcellularLocation>
</comment>
<comment type="similarity">
    <text evidence="1">Belongs to the type III pantothenate kinase family.</text>
</comment>
<sequence length="258" mass="28146">MIFVLDVGNTNTVLGVYDGDELKYHWRIETSRAKTEDEYGMTIKALLNHVGLQFSDIRGMIISSVVPPIMFALERMCLKYFHIKPLIVGPGIKTGLDIKYENPREVGADRIVNAVAGIHLYGSPLIIVDFGTATTYCYINEHKQYMGGAIAPGIMISTEALFARAAKLPRIEIARPDDIVGKNTVSAMQAGILYGYVGQVEGIVSRMKAKSKVPPKVIATGGLAPLIASESSVIDVVDPFLTLTGLKLLYEKNTEKKG</sequence>
<organism>
    <name type="scientific">Geobacillus thermodenitrificans (strain NG80-2)</name>
    <dbReference type="NCBI Taxonomy" id="420246"/>
    <lineage>
        <taxon>Bacteria</taxon>
        <taxon>Bacillati</taxon>
        <taxon>Bacillota</taxon>
        <taxon>Bacilli</taxon>
        <taxon>Bacillales</taxon>
        <taxon>Anoxybacillaceae</taxon>
        <taxon>Geobacillus</taxon>
    </lineage>
</organism>
<proteinExistence type="inferred from homology"/>
<feature type="chain" id="PRO_1000054378" description="Type III pantothenate kinase">
    <location>
        <begin position="1"/>
        <end position="258"/>
    </location>
</feature>
<feature type="active site" description="Proton acceptor" evidence="1">
    <location>
        <position position="109"/>
    </location>
</feature>
<feature type="binding site" evidence="1">
    <location>
        <begin position="6"/>
        <end position="13"/>
    </location>
    <ligand>
        <name>ATP</name>
        <dbReference type="ChEBI" id="CHEBI:30616"/>
    </ligand>
</feature>
<feature type="binding site" evidence="1">
    <location>
        <position position="100"/>
    </location>
    <ligand>
        <name>substrate</name>
    </ligand>
</feature>
<feature type="binding site" evidence="1">
    <location>
        <begin position="107"/>
        <end position="110"/>
    </location>
    <ligand>
        <name>substrate</name>
    </ligand>
</feature>
<feature type="binding site" evidence="1">
    <location>
        <position position="129"/>
    </location>
    <ligand>
        <name>K(+)</name>
        <dbReference type="ChEBI" id="CHEBI:29103"/>
    </ligand>
</feature>
<feature type="binding site" evidence="1">
    <location>
        <position position="132"/>
    </location>
    <ligand>
        <name>ATP</name>
        <dbReference type="ChEBI" id="CHEBI:30616"/>
    </ligand>
</feature>
<feature type="binding site" evidence="1">
    <location>
        <position position="184"/>
    </location>
    <ligand>
        <name>substrate</name>
    </ligand>
</feature>
<name>COAX_GEOTN</name>
<accession>A4IJE6</accession>
<keyword id="KW-0067">ATP-binding</keyword>
<keyword id="KW-0173">Coenzyme A biosynthesis</keyword>
<keyword id="KW-0963">Cytoplasm</keyword>
<keyword id="KW-0418">Kinase</keyword>
<keyword id="KW-0479">Metal-binding</keyword>
<keyword id="KW-0547">Nucleotide-binding</keyword>
<keyword id="KW-0630">Potassium</keyword>
<keyword id="KW-0808">Transferase</keyword>
<reference key="1">
    <citation type="journal article" date="2007" name="Proc. Natl. Acad. Sci. U.S.A.">
        <title>Genome and proteome of long-chain alkane degrading Geobacillus thermodenitrificans NG80-2 isolated from a deep-subsurface oil reservoir.</title>
        <authorList>
            <person name="Feng L."/>
            <person name="Wang W."/>
            <person name="Cheng J."/>
            <person name="Ren Y."/>
            <person name="Zhao G."/>
            <person name="Gao C."/>
            <person name="Tang Y."/>
            <person name="Liu X."/>
            <person name="Han W."/>
            <person name="Peng X."/>
            <person name="Liu R."/>
            <person name="Wang L."/>
        </authorList>
    </citation>
    <scope>NUCLEOTIDE SEQUENCE [LARGE SCALE GENOMIC DNA]</scope>
    <source>
        <strain>NG80-2</strain>
    </source>
</reference>
<gene>
    <name evidence="1" type="primary">coaX</name>
    <name type="ordered locus">GTNG_0063</name>
</gene>
<evidence type="ECO:0000255" key="1">
    <source>
        <dbReference type="HAMAP-Rule" id="MF_01274"/>
    </source>
</evidence>